<evidence type="ECO:0000255" key="1">
    <source>
        <dbReference type="HAMAP-Rule" id="MF_01227"/>
    </source>
</evidence>
<reference key="1">
    <citation type="journal article" date="2006" name="Proc. Natl. Acad. Sci. U.S.A.">
        <title>Comparative genomics of the lactic acid bacteria.</title>
        <authorList>
            <person name="Makarova K.S."/>
            <person name="Slesarev A."/>
            <person name="Wolf Y.I."/>
            <person name="Sorokin A."/>
            <person name="Mirkin B."/>
            <person name="Koonin E.V."/>
            <person name="Pavlov A."/>
            <person name="Pavlova N."/>
            <person name="Karamychev V."/>
            <person name="Polouchine N."/>
            <person name="Shakhova V."/>
            <person name="Grigoriev I."/>
            <person name="Lou Y."/>
            <person name="Rohksar D."/>
            <person name="Lucas S."/>
            <person name="Huang K."/>
            <person name="Goodstein D.M."/>
            <person name="Hawkins T."/>
            <person name="Plengvidhya V."/>
            <person name="Welker D."/>
            <person name="Hughes J."/>
            <person name="Goh Y."/>
            <person name="Benson A."/>
            <person name="Baldwin K."/>
            <person name="Lee J.-H."/>
            <person name="Diaz-Muniz I."/>
            <person name="Dosti B."/>
            <person name="Smeianov V."/>
            <person name="Wechter W."/>
            <person name="Barabote R."/>
            <person name="Lorca G."/>
            <person name="Altermann E."/>
            <person name="Barrangou R."/>
            <person name="Ganesan B."/>
            <person name="Xie Y."/>
            <person name="Rawsthorne H."/>
            <person name="Tamir D."/>
            <person name="Parker C."/>
            <person name="Breidt F."/>
            <person name="Broadbent J.R."/>
            <person name="Hutkins R."/>
            <person name="O'Sullivan D."/>
            <person name="Steele J."/>
            <person name="Unlu G."/>
            <person name="Saier M.H. Jr."/>
            <person name="Klaenhammer T."/>
            <person name="Richardson P."/>
            <person name="Kozyavkin S."/>
            <person name="Weimer B.C."/>
            <person name="Mills D.A."/>
        </authorList>
    </citation>
    <scope>NUCLEOTIDE SEQUENCE [LARGE SCALE GENOMIC DNA]</scope>
    <source>
        <strain>ATCC BAA-365 / Lb-18</strain>
    </source>
</reference>
<gene>
    <name evidence="1" type="primary">pyrG</name>
    <name type="ordered locus">LBUL_0309</name>
</gene>
<feature type="chain" id="PRO_1000139478" description="CTP synthase">
    <location>
        <begin position="1"/>
        <end position="539"/>
    </location>
</feature>
<feature type="domain" description="Glutamine amidotransferase type-1" evidence="1">
    <location>
        <begin position="294"/>
        <end position="537"/>
    </location>
</feature>
<feature type="region of interest" description="Amidoligase domain" evidence="1">
    <location>
        <begin position="1"/>
        <end position="267"/>
    </location>
</feature>
<feature type="active site" description="Nucleophile; for glutamine hydrolysis" evidence="1">
    <location>
        <position position="383"/>
    </location>
</feature>
<feature type="active site" evidence="1">
    <location>
        <position position="510"/>
    </location>
</feature>
<feature type="active site" evidence="1">
    <location>
        <position position="512"/>
    </location>
</feature>
<feature type="binding site" evidence="1">
    <location>
        <position position="13"/>
    </location>
    <ligand>
        <name>CTP</name>
        <dbReference type="ChEBI" id="CHEBI:37563"/>
        <note>allosteric inhibitor</note>
    </ligand>
</feature>
<feature type="binding site" evidence="1">
    <location>
        <position position="13"/>
    </location>
    <ligand>
        <name>UTP</name>
        <dbReference type="ChEBI" id="CHEBI:46398"/>
    </ligand>
</feature>
<feature type="binding site" evidence="1">
    <location>
        <begin position="14"/>
        <end position="19"/>
    </location>
    <ligand>
        <name>ATP</name>
        <dbReference type="ChEBI" id="CHEBI:30616"/>
    </ligand>
</feature>
<feature type="binding site" evidence="1">
    <location>
        <position position="54"/>
    </location>
    <ligand>
        <name>L-glutamine</name>
        <dbReference type="ChEBI" id="CHEBI:58359"/>
    </ligand>
</feature>
<feature type="binding site" evidence="1">
    <location>
        <position position="71"/>
    </location>
    <ligand>
        <name>ATP</name>
        <dbReference type="ChEBI" id="CHEBI:30616"/>
    </ligand>
</feature>
<feature type="binding site" evidence="1">
    <location>
        <position position="71"/>
    </location>
    <ligand>
        <name>Mg(2+)</name>
        <dbReference type="ChEBI" id="CHEBI:18420"/>
    </ligand>
</feature>
<feature type="binding site" evidence="1">
    <location>
        <position position="141"/>
    </location>
    <ligand>
        <name>Mg(2+)</name>
        <dbReference type="ChEBI" id="CHEBI:18420"/>
    </ligand>
</feature>
<feature type="binding site" evidence="1">
    <location>
        <begin position="148"/>
        <end position="150"/>
    </location>
    <ligand>
        <name>CTP</name>
        <dbReference type="ChEBI" id="CHEBI:37563"/>
        <note>allosteric inhibitor</note>
    </ligand>
</feature>
<feature type="binding site" evidence="1">
    <location>
        <begin position="188"/>
        <end position="193"/>
    </location>
    <ligand>
        <name>CTP</name>
        <dbReference type="ChEBI" id="CHEBI:37563"/>
        <note>allosteric inhibitor</note>
    </ligand>
</feature>
<feature type="binding site" evidence="1">
    <location>
        <begin position="188"/>
        <end position="193"/>
    </location>
    <ligand>
        <name>UTP</name>
        <dbReference type="ChEBI" id="CHEBI:46398"/>
    </ligand>
</feature>
<feature type="binding site" evidence="1">
    <location>
        <position position="224"/>
    </location>
    <ligand>
        <name>CTP</name>
        <dbReference type="ChEBI" id="CHEBI:37563"/>
        <note>allosteric inhibitor</note>
    </ligand>
</feature>
<feature type="binding site" evidence="1">
    <location>
        <position position="224"/>
    </location>
    <ligand>
        <name>UTP</name>
        <dbReference type="ChEBI" id="CHEBI:46398"/>
    </ligand>
</feature>
<feature type="binding site" evidence="1">
    <location>
        <position position="356"/>
    </location>
    <ligand>
        <name>L-glutamine</name>
        <dbReference type="ChEBI" id="CHEBI:58359"/>
    </ligand>
</feature>
<feature type="binding site" evidence="1">
    <location>
        <begin position="384"/>
        <end position="387"/>
    </location>
    <ligand>
        <name>L-glutamine</name>
        <dbReference type="ChEBI" id="CHEBI:58359"/>
    </ligand>
</feature>
<feature type="binding site" evidence="1">
    <location>
        <position position="407"/>
    </location>
    <ligand>
        <name>L-glutamine</name>
        <dbReference type="ChEBI" id="CHEBI:58359"/>
    </ligand>
</feature>
<feature type="binding site" evidence="1">
    <location>
        <position position="465"/>
    </location>
    <ligand>
        <name>L-glutamine</name>
        <dbReference type="ChEBI" id="CHEBI:58359"/>
    </ligand>
</feature>
<accession>Q04C51</accession>
<organism>
    <name type="scientific">Lactobacillus delbrueckii subsp. bulgaricus (strain ATCC BAA-365 / Lb-18)</name>
    <dbReference type="NCBI Taxonomy" id="321956"/>
    <lineage>
        <taxon>Bacteria</taxon>
        <taxon>Bacillati</taxon>
        <taxon>Bacillota</taxon>
        <taxon>Bacilli</taxon>
        <taxon>Lactobacillales</taxon>
        <taxon>Lactobacillaceae</taxon>
        <taxon>Lactobacillus</taxon>
    </lineage>
</organism>
<protein>
    <recommendedName>
        <fullName evidence="1">CTP synthase</fullName>
        <ecNumber evidence="1">6.3.4.2</ecNumber>
    </recommendedName>
    <alternativeName>
        <fullName evidence="1">Cytidine 5'-triphosphate synthase</fullName>
    </alternativeName>
    <alternativeName>
        <fullName evidence="1">Cytidine triphosphate synthetase</fullName>
        <shortName evidence="1">CTP synthetase</shortName>
        <shortName evidence="1">CTPS</shortName>
    </alternativeName>
    <alternativeName>
        <fullName evidence="1">UTP--ammonia ligase</fullName>
    </alternativeName>
</protein>
<name>PYRG_LACDB</name>
<proteinExistence type="inferred from homology"/>
<keyword id="KW-0067">ATP-binding</keyword>
<keyword id="KW-0315">Glutamine amidotransferase</keyword>
<keyword id="KW-0436">Ligase</keyword>
<keyword id="KW-0460">Magnesium</keyword>
<keyword id="KW-0479">Metal-binding</keyword>
<keyword id="KW-0547">Nucleotide-binding</keyword>
<keyword id="KW-0665">Pyrimidine biosynthesis</keyword>
<comment type="function">
    <text evidence="1">Catalyzes the ATP-dependent amination of UTP to CTP with either L-glutamine or ammonia as the source of nitrogen. Regulates intracellular CTP levels through interactions with the four ribonucleotide triphosphates.</text>
</comment>
<comment type="catalytic activity">
    <reaction evidence="1">
        <text>UTP + L-glutamine + ATP + H2O = CTP + L-glutamate + ADP + phosphate + 2 H(+)</text>
        <dbReference type="Rhea" id="RHEA:26426"/>
        <dbReference type="ChEBI" id="CHEBI:15377"/>
        <dbReference type="ChEBI" id="CHEBI:15378"/>
        <dbReference type="ChEBI" id="CHEBI:29985"/>
        <dbReference type="ChEBI" id="CHEBI:30616"/>
        <dbReference type="ChEBI" id="CHEBI:37563"/>
        <dbReference type="ChEBI" id="CHEBI:43474"/>
        <dbReference type="ChEBI" id="CHEBI:46398"/>
        <dbReference type="ChEBI" id="CHEBI:58359"/>
        <dbReference type="ChEBI" id="CHEBI:456216"/>
        <dbReference type="EC" id="6.3.4.2"/>
    </reaction>
</comment>
<comment type="catalytic activity">
    <reaction evidence="1">
        <text>L-glutamine + H2O = L-glutamate + NH4(+)</text>
        <dbReference type="Rhea" id="RHEA:15889"/>
        <dbReference type="ChEBI" id="CHEBI:15377"/>
        <dbReference type="ChEBI" id="CHEBI:28938"/>
        <dbReference type="ChEBI" id="CHEBI:29985"/>
        <dbReference type="ChEBI" id="CHEBI:58359"/>
    </reaction>
</comment>
<comment type="catalytic activity">
    <reaction evidence="1">
        <text>UTP + NH4(+) + ATP = CTP + ADP + phosphate + 2 H(+)</text>
        <dbReference type="Rhea" id="RHEA:16597"/>
        <dbReference type="ChEBI" id="CHEBI:15378"/>
        <dbReference type="ChEBI" id="CHEBI:28938"/>
        <dbReference type="ChEBI" id="CHEBI:30616"/>
        <dbReference type="ChEBI" id="CHEBI:37563"/>
        <dbReference type="ChEBI" id="CHEBI:43474"/>
        <dbReference type="ChEBI" id="CHEBI:46398"/>
        <dbReference type="ChEBI" id="CHEBI:456216"/>
    </reaction>
</comment>
<comment type="activity regulation">
    <text evidence="1">Allosterically activated by GTP, when glutamine is the substrate; GTP has no effect on the reaction when ammonia is the substrate. The allosteric effector GTP functions by stabilizing the protein conformation that binds the tetrahedral intermediate(s) formed during glutamine hydrolysis. Inhibited by the product CTP, via allosteric rather than competitive inhibition.</text>
</comment>
<comment type="pathway">
    <text evidence="1">Pyrimidine metabolism; CTP biosynthesis via de novo pathway; CTP from UDP: step 2/2.</text>
</comment>
<comment type="subunit">
    <text evidence="1">Homotetramer.</text>
</comment>
<comment type="miscellaneous">
    <text evidence="1">CTPSs have evolved a hybrid strategy for distinguishing between UTP and CTP. The overlapping regions of the product feedback inhibitory and substrate sites recognize a common feature in both compounds, the triphosphate moiety. To differentiate isosteric substrate and product pyrimidine rings, an additional pocket far from the expected kinase/ligase catalytic site, specifically recognizes the cytosine and ribose portions of the product inhibitor.</text>
</comment>
<comment type="similarity">
    <text evidence="1">Belongs to the CTP synthase family.</text>
</comment>
<sequence>MTKYIFVTGGVVSSLGKGITASSIGRLLKNRGLKVTMQKFDPYINIDPGTMNPYQHGEVFVTDDGTEADLDLGHYERLVDVRTSKYSNVTTGKIYQEVLQRERRGDYHGGTVQVIPHVTNMIKEKVMRAAQMTDTDVVISEIGGTVGDMESTPFMEAIRQMRREVGSENVMYVHVTFVPYLRAAKELKSKPTQQSVSMLRSIGIQPNMLVLRSEMPVPQEMKDKISTFTDVPVDYIVESLDAPSLFDVPLSYQEQGVDQKVVDFLHIDSPKPVADMDEWRRMDERAKNLKYKTKITLVGKYVELEDAYISVTDALQHAGYLYNSKIEVEKIQAEDITEDNVAELLKDTQGLIVPGGFGIRGLDGMITSIKYAREHDIPFLGICLGMQMASVEFARNVLHLEDANSAEAEPNCKNNIIDLMADQRDQEKIGGTLRLGLYPAMLKAGTKTRECYDGQEVIQERHRHRYEFYNKYREDFEKAGMTFSGVSPDNHLVEIVEITDKKFFVAAQYHPEFLSRPNRPEGLFKGFIGAASGLQVDKF</sequence>
<dbReference type="EC" id="6.3.4.2" evidence="1"/>
<dbReference type="EMBL" id="CP000412">
    <property type="protein sequence ID" value="ABJ57971.1"/>
    <property type="molecule type" value="Genomic_DNA"/>
</dbReference>
<dbReference type="RefSeq" id="WP_011678012.1">
    <property type="nucleotide sequence ID" value="NC_008529.1"/>
</dbReference>
<dbReference type="SMR" id="Q04C51"/>
<dbReference type="KEGG" id="lbu:LBUL_0309"/>
<dbReference type="HOGENOM" id="CLU_011675_5_0_9"/>
<dbReference type="BioCyc" id="LDEL321956:LBUL_RS01445-MONOMER"/>
<dbReference type="UniPathway" id="UPA00159">
    <property type="reaction ID" value="UER00277"/>
</dbReference>
<dbReference type="GO" id="GO:0005829">
    <property type="term" value="C:cytosol"/>
    <property type="evidence" value="ECO:0007669"/>
    <property type="project" value="TreeGrafter"/>
</dbReference>
<dbReference type="GO" id="GO:0005524">
    <property type="term" value="F:ATP binding"/>
    <property type="evidence" value="ECO:0007669"/>
    <property type="project" value="UniProtKB-KW"/>
</dbReference>
<dbReference type="GO" id="GO:0003883">
    <property type="term" value="F:CTP synthase activity"/>
    <property type="evidence" value="ECO:0007669"/>
    <property type="project" value="UniProtKB-UniRule"/>
</dbReference>
<dbReference type="GO" id="GO:0004359">
    <property type="term" value="F:glutaminase activity"/>
    <property type="evidence" value="ECO:0007669"/>
    <property type="project" value="RHEA"/>
</dbReference>
<dbReference type="GO" id="GO:0042802">
    <property type="term" value="F:identical protein binding"/>
    <property type="evidence" value="ECO:0007669"/>
    <property type="project" value="TreeGrafter"/>
</dbReference>
<dbReference type="GO" id="GO:0046872">
    <property type="term" value="F:metal ion binding"/>
    <property type="evidence" value="ECO:0007669"/>
    <property type="project" value="UniProtKB-KW"/>
</dbReference>
<dbReference type="GO" id="GO:0044210">
    <property type="term" value="P:'de novo' CTP biosynthetic process"/>
    <property type="evidence" value="ECO:0007669"/>
    <property type="project" value="UniProtKB-UniRule"/>
</dbReference>
<dbReference type="GO" id="GO:0019856">
    <property type="term" value="P:pyrimidine nucleobase biosynthetic process"/>
    <property type="evidence" value="ECO:0007669"/>
    <property type="project" value="TreeGrafter"/>
</dbReference>
<dbReference type="CDD" id="cd03113">
    <property type="entry name" value="CTPS_N"/>
    <property type="match status" value="1"/>
</dbReference>
<dbReference type="CDD" id="cd01746">
    <property type="entry name" value="GATase1_CTP_Synthase"/>
    <property type="match status" value="1"/>
</dbReference>
<dbReference type="FunFam" id="3.40.50.300:FF:000009">
    <property type="entry name" value="CTP synthase"/>
    <property type="match status" value="1"/>
</dbReference>
<dbReference type="FunFam" id="3.40.50.880:FF:000002">
    <property type="entry name" value="CTP synthase"/>
    <property type="match status" value="1"/>
</dbReference>
<dbReference type="Gene3D" id="3.40.50.880">
    <property type="match status" value="1"/>
</dbReference>
<dbReference type="Gene3D" id="3.40.50.300">
    <property type="entry name" value="P-loop containing nucleotide triphosphate hydrolases"/>
    <property type="match status" value="1"/>
</dbReference>
<dbReference type="HAMAP" id="MF_01227">
    <property type="entry name" value="PyrG"/>
    <property type="match status" value="1"/>
</dbReference>
<dbReference type="InterPro" id="IPR029062">
    <property type="entry name" value="Class_I_gatase-like"/>
</dbReference>
<dbReference type="InterPro" id="IPR004468">
    <property type="entry name" value="CTP_synthase"/>
</dbReference>
<dbReference type="InterPro" id="IPR017456">
    <property type="entry name" value="CTP_synthase_N"/>
</dbReference>
<dbReference type="InterPro" id="IPR017926">
    <property type="entry name" value="GATASE"/>
</dbReference>
<dbReference type="InterPro" id="IPR033828">
    <property type="entry name" value="GATase1_CTP_Synthase"/>
</dbReference>
<dbReference type="InterPro" id="IPR027417">
    <property type="entry name" value="P-loop_NTPase"/>
</dbReference>
<dbReference type="NCBIfam" id="NF003792">
    <property type="entry name" value="PRK05380.1"/>
    <property type="match status" value="1"/>
</dbReference>
<dbReference type="NCBIfam" id="TIGR00337">
    <property type="entry name" value="PyrG"/>
    <property type="match status" value="1"/>
</dbReference>
<dbReference type="PANTHER" id="PTHR11550">
    <property type="entry name" value="CTP SYNTHASE"/>
    <property type="match status" value="1"/>
</dbReference>
<dbReference type="PANTHER" id="PTHR11550:SF0">
    <property type="entry name" value="CTP SYNTHASE-RELATED"/>
    <property type="match status" value="1"/>
</dbReference>
<dbReference type="Pfam" id="PF06418">
    <property type="entry name" value="CTP_synth_N"/>
    <property type="match status" value="1"/>
</dbReference>
<dbReference type="Pfam" id="PF00117">
    <property type="entry name" value="GATase"/>
    <property type="match status" value="1"/>
</dbReference>
<dbReference type="SUPFAM" id="SSF52317">
    <property type="entry name" value="Class I glutamine amidotransferase-like"/>
    <property type="match status" value="1"/>
</dbReference>
<dbReference type="SUPFAM" id="SSF52540">
    <property type="entry name" value="P-loop containing nucleoside triphosphate hydrolases"/>
    <property type="match status" value="1"/>
</dbReference>
<dbReference type="PROSITE" id="PS51273">
    <property type="entry name" value="GATASE_TYPE_1"/>
    <property type="match status" value="1"/>
</dbReference>